<organismHost>
    <name type="scientific">Vitis vinifera</name>
    <name type="common">Grape</name>
    <dbReference type="NCBI Taxonomy" id="29760"/>
</organismHost>
<gene>
    <name type="ORF">1a</name>
</gene>
<organism>
    <name type="scientific">Grapevine leafroll-associated virus 3 (isolate United States/NY1)</name>
    <name type="common">GLRaV-3</name>
    <name type="synonym">Grapevine leafroll-associated closterovirus (isolate 109)</name>
    <dbReference type="NCBI Taxonomy" id="651354"/>
    <lineage>
        <taxon>Viruses</taxon>
        <taxon>Riboviria</taxon>
        <taxon>Orthornavirae</taxon>
        <taxon>Kitrinoviricota</taxon>
        <taxon>Alsuviricetes</taxon>
        <taxon>Martellivirales</taxon>
        <taxon>Closteroviridae</taxon>
        <taxon>Ampelovirus</taxon>
        <taxon>Grapevine leafroll-associated virus 3</taxon>
    </lineage>
</organism>
<proteinExistence type="inferred from homology"/>
<name>R1A_GLRV3</name>
<dbReference type="EC" id="3.4.22.-"/>
<dbReference type="EC" id="2.1.1.-"/>
<dbReference type="EC" id="3.6.4.13"/>
<dbReference type="EMBL" id="AF037268">
    <property type="protein sequence ID" value="AAC40717.3"/>
    <property type="molecule type" value="Genomic_RNA"/>
</dbReference>
<dbReference type="RefSeq" id="NP_813795.3">
    <property type="nucleotide sequence ID" value="NC_004667.1"/>
</dbReference>
<dbReference type="SMR" id="O71188"/>
<dbReference type="KEGG" id="vg:1444473"/>
<dbReference type="Proteomes" id="UP000006707">
    <property type="component" value="Segment"/>
</dbReference>
<dbReference type="GO" id="GO:0005524">
    <property type="term" value="F:ATP binding"/>
    <property type="evidence" value="ECO:0007669"/>
    <property type="project" value="UniProtKB-KW"/>
</dbReference>
<dbReference type="GO" id="GO:0016887">
    <property type="term" value="F:ATP hydrolysis activity"/>
    <property type="evidence" value="ECO:0007669"/>
    <property type="project" value="RHEA"/>
</dbReference>
<dbReference type="GO" id="GO:0008234">
    <property type="term" value="F:cysteine-type peptidase activity"/>
    <property type="evidence" value="ECO:0007669"/>
    <property type="project" value="UniProtKB-KW"/>
</dbReference>
<dbReference type="GO" id="GO:0051213">
    <property type="term" value="F:dioxygenase activity"/>
    <property type="evidence" value="ECO:0007669"/>
    <property type="project" value="UniProtKB-KW"/>
</dbReference>
<dbReference type="GO" id="GO:0046872">
    <property type="term" value="F:metal ion binding"/>
    <property type="evidence" value="ECO:0007669"/>
    <property type="project" value="UniProtKB-KW"/>
</dbReference>
<dbReference type="GO" id="GO:0008174">
    <property type="term" value="F:mRNA methyltransferase activity"/>
    <property type="evidence" value="ECO:0007669"/>
    <property type="project" value="InterPro"/>
</dbReference>
<dbReference type="GO" id="GO:0003723">
    <property type="term" value="F:RNA binding"/>
    <property type="evidence" value="ECO:0007669"/>
    <property type="project" value="InterPro"/>
</dbReference>
<dbReference type="GO" id="GO:0003724">
    <property type="term" value="F:RNA helicase activity"/>
    <property type="evidence" value="ECO:0007669"/>
    <property type="project" value="UniProtKB-EC"/>
</dbReference>
<dbReference type="GO" id="GO:0032259">
    <property type="term" value="P:methylation"/>
    <property type="evidence" value="ECO:0007669"/>
    <property type="project" value="UniProtKB-KW"/>
</dbReference>
<dbReference type="GO" id="GO:0016556">
    <property type="term" value="P:mRNA modification"/>
    <property type="evidence" value="ECO:0007669"/>
    <property type="project" value="InterPro"/>
</dbReference>
<dbReference type="GO" id="GO:0006508">
    <property type="term" value="P:proteolysis"/>
    <property type="evidence" value="ECO:0007669"/>
    <property type="project" value="UniProtKB-KW"/>
</dbReference>
<dbReference type="GO" id="GO:0006396">
    <property type="term" value="P:RNA processing"/>
    <property type="evidence" value="ECO:0007669"/>
    <property type="project" value="InterPro"/>
</dbReference>
<dbReference type="GO" id="GO:0075523">
    <property type="term" value="P:viral translational frameshifting"/>
    <property type="evidence" value="ECO:0007669"/>
    <property type="project" value="UniProtKB-KW"/>
</dbReference>
<dbReference type="Gene3D" id="2.60.120.590">
    <property type="entry name" value="Alpha-ketoglutarate-dependent dioxygenase AlkB-like"/>
    <property type="match status" value="1"/>
</dbReference>
<dbReference type="Gene3D" id="3.40.50.300">
    <property type="entry name" value="P-loop containing nucleotide triphosphate hydrolases"/>
    <property type="match status" value="2"/>
</dbReference>
<dbReference type="InterPro" id="IPR027351">
    <property type="entry name" value="(+)RNA_virus_helicase_core_dom"/>
</dbReference>
<dbReference type="InterPro" id="IPR037151">
    <property type="entry name" value="AlkB-like_sf"/>
</dbReference>
<dbReference type="InterPro" id="IPR002588">
    <property type="entry name" value="Alphavirus-like_MT_dom"/>
</dbReference>
<dbReference type="InterPro" id="IPR044861">
    <property type="entry name" value="IPNS-like_FE2OG_OXY"/>
</dbReference>
<dbReference type="InterPro" id="IPR005123">
    <property type="entry name" value="Oxoglu/Fe-dep_dioxygenase_dom"/>
</dbReference>
<dbReference type="InterPro" id="IPR027417">
    <property type="entry name" value="P-loop_NTPase"/>
</dbReference>
<dbReference type="Pfam" id="PF03171">
    <property type="entry name" value="2OG-FeII_Oxy"/>
    <property type="match status" value="1"/>
</dbReference>
<dbReference type="Pfam" id="PF01443">
    <property type="entry name" value="Viral_helicase1"/>
    <property type="match status" value="1"/>
</dbReference>
<dbReference type="Pfam" id="PF01660">
    <property type="entry name" value="Vmethyltransf"/>
    <property type="match status" value="1"/>
</dbReference>
<dbReference type="SUPFAM" id="SSF51197">
    <property type="entry name" value="Clavaminate synthase-like"/>
    <property type="match status" value="1"/>
</dbReference>
<dbReference type="SUPFAM" id="SSF52540">
    <property type="entry name" value="P-loop containing nucleoside triphosphate hydrolases"/>
    <property type="match status" value="2"/>
</dbReference>
<dbReference type="PROSITE" id="PS51743">
    <property type="entry name" value="ALPHAVIRUS_MT"/>
    <property type="match status" value="1"/>
</dbReference>
<dbReference type="PROSITE" id="PS51471">
    <property type="entry name" value="FE2OG_OXY"/>
    <property type="match status" value="1"/>
</dbReference>
<dbReference type="PROSITE" id="PS51657">
    <property type="entry name" value="PSRV_HELICASE"/>
    <property type="match status" value="1"/>
</dbReference>
<reference key="1">
    <citation type="journal article" date="1998" name="J. Gen. Virol.">
        <title>Nucleotide sequence of the 3'-terminal two-thirds of the grapevine leafroll-associated virus-3 genome reveals a typical monopartite closterovirus.</title>
        <authorList>
            <person name="Ling K.S."/>
            <person name="Zhu H.Y."/>
            <person name="Drong R.F."/>
            <person name="Slightom J.L."/>
            <person name="McFerson J.R."/>
            <person name="Gonsalves D."/>
        </authorList>
    </citation>
    <scope>NUCLEOTIDE SEQUENCE [GENOMIC RNA]</scope>
</reference>
<feature type="chain" id="PRO_0000402531" description="Replicase protein 1a">
    <location>
        <begin position="1"/>
        <end position="2233"/>
    </location>
</feature>
<feature type="chain" id="PRO_0000402532" description="Leader protease" evidence="1">
    <location>
        <begin position="1"/>
        <end position="393"/>
    </location>
</feature>
<feature type="chain" id="PRO_0000402533" description="Methyltransferase/helicase" evidence="1">
    <location>
        <begin position="394"/>
        <end position="2233"/>
    </location>
</feature>
<feature type="domain" description="Alphavirus-like MT" evidence="3">
    <location>
        <begin position="478"/>
        <end position="669"/>
    </location>
</feature>
<feature type="domain" description="Fe2OG dioxygenase" evidence="2">
    <location>
        <begin position="1601"/>
        <end position="1694"/>
    </location>
</feature>
<feature type="domain" description="(+)RNA virus helicase ATP-binding">
    <location>
        <begin position="1902"/>
        <end position="2066"/>
    </location>
</feature>
<feature type="domain" description="(+)RNA virus helicase C-terminal">
    <location>
        <begin position="2067"/>
        <end position="2230"/>
    </location>
</feature>
<feature type="region of interest" description="Disordered" evidence="4">
    <location>
        <begin position="143"/>
        <end position="163"/>
    </location>
</feature>
<feature type="region of interest" description="Disordered" evidence="4">
    <location>
        <begin position="1277"/>
        <end position="1301"/>
    </location>
</feature>
<feature type="region of interest" description="Disordered" evidence="4">
    <location>
        <begin position="1400"/>
        <end position="1442"/>
    </location>
</feature>
<feature type="region of interest" description="Disordered" evidence="4">
    <location>
        <begin position="1708"/>
        <end position="1746"/>
    </location>
</feature>
<feature type="compositionally biased region" description="Basic and acidic residues" evidence="4">
    <location>
        <begin position="143"/>
        <end position="157"/>
    </location>
</feature>
<feature type="compositionally biased region" description="Polar residues" evidence="4">
    <location>
        <begin position="1430"/>
        <end position="1442"/>
    </location>
</feature>
<feature type="compositionally biased region" description="Polar residues" evidence="4">
    <location>
        <begin position="1717"/>
        <end position="1733"/>
    </location>
</feature>
<feature type="active site" description="For leader protease activity" evidence="1">
    <location>
        <position position="311"/>
    </location>
</feature>
<feature type="active site" description="For leader protease activity" evidence="1">
    <location>
        <position position="357"/>
    </location>
</feature>
<feature type="binding site" evidence="2">
    <location>
        <position position="1619"/>
    </location>
    <ligand>
        <name>Fe cation</name>
        <dbReference type="ChEBI" id="CHEBI:24875"/>
    </ligand>
</feature>
<feature type="binding site" evidence="2">
    <location>
        <position position="1621"/>
    </location>
    <ligand>
        <name>Fe cation</name>
        <dbReference type="ChEBI" id="CHEBI:24875"/>
    </ligand>
</feature>
<feature type="binding site" evidence="2">
    <location>
        <position position="1676"/>
    </location>
    <ligand>
        <name>Fe cation</name>
        <dbReference type="ChEBI" id="CHEBI:24875"/>
    </ligand>
</feature>
<feature type="binding site" evidence="2">
    <location>
        <position position="1685"/>
    </location>
    <ligand>
        <name>2-oxoglutarate</name>
        <dbReference type="ChEBI" id="CHEBI:16810"/>
    </ligand>
</feature>
<feature type="site" description="Cleavage; by the leader protease" evidence="1">
    <location>
        <begin position="393"/>
        <end position="394"/>
    </location>
</feature>
<accession>O71188</accession>
<evidence type="ECO:0000250" key="1"/>
<evidence type="ECO:0000255" key="2">
    <source>
        <dbReference type="PROSITE-ProRule" id="PRU00805"/>
    </source>
</evidence>
<evidence type="ECO:0000255" key="3">
    <source>
        <dbReference type="PROSITE-ProRule" id="PRU01079"/>
    </source>
</evidence>
<evidence type="ECO:0000256" key="4">
    <source>
        <dbReference type="SAM" id="MobiDB-lite"/>
    </source>
</evidence>
<sequence>MDYIRPLRVFSFPHVNNTLEYVRYNKANGDVGAFLTTMKFIGNVKLSDFTPRCAAMIYIGKLTKGVKRTFVPPPVKGFARQYAVVSGSVSALRGDGKKVLMEARTSTSATSDVSDFDVVFEAVSNALLVVHYHRVVPYAPVKREQPKPAVKQDEQKPKRQASHWAVKPTAVGVHVPLPKKQEALEPAQSVPQQSLEEKAALTFGLFFSKGGGDESDAVILRKGKLFNRALNVPIDVKNTFVWAKIWDEASRRRGYFYVKDRAVKFFPIVRGRATIEDFIVNTAPGCDVALPRIELWSMRERAFVCTTKGWCWFNNERLRGEIYRRRCFSSSFSIGFLMHLGFRSLKVIRFAGTNILHMPSLNEERTFGWKGGDVYLPNVPKTAIVAGDRTRLGGEILASVANALNQEEVYSSVVSSITNRLVLRDQSALLSHLDTKLCDMFSQRDAMIREKPSHRCDVFLKPREREKLRELFPELSIQFSDSVRSSHPFANAMRSCFNGIFSRRCGNVCFFDIGGSFTYHVKAGHVNCHVCNPVLDVKDVKRRINEILFLSTAGGDSYVSSDLLTEAASKSVSYCSRESQNCDSRADAGFMVDVYDISPQQVAEAMDKKGALVFDIALMFPVELLYGNGEVYLEELDTLVKREGDYLAYNVGQCGEMYEHSFSNVSGFFTFSYVRTSSGNVFKLEYEGYRCGYHHLTMCRAQKSPGTEVTYRSLVPSFVGKSLVFIPVVAGSSVSFKTIVLDSDFVDRIYSYALNTIGTFENRTFEYAVGAVRSQKTHVITGSRVVHSKVDISPDDMWGLVVAVMAQAIKDRAKSIRSYNFIKASEGSLAGVFKLFFQTVGDCFSNAVSVYAKAMVHDNFNVLETLMSMPRAFIRKVPGSVVVTICTSGASDRLELRGAFDISKETFGRKLKNSRLRVFSRAIVEDSIKVMKAMKTEDGKPLPITEDSVYAFIMGNVSNVHCTRAGLLGGSKATVVSSVSKGLVARGAATKAFSGITSFFSTGSLFYDRGLTEDERLDALVRTENAINSPVGILETSRVAVSKVVAGTKEFWSEVSLNDFTTFVLRNKVLIGIFVASLGAAPIAWKYRRGIAANARRYAGSSYETLSSLSSQAAGGLRGLTSSTVSGGSLVVRRGFSSAVTVTRATVAKRQVPLALLSFSTSYAISGCSMLGIWAHALPRHLMFFFGLGTLLGARASANTWKFGGFSNNWCAVPEVVWRGKSVSSLLLPITLGVSLIIRGLLNDTIPQLAYVPPVEGRNVYDETLRYYRDFDYDEGAGPSGTQHEAVPGDDNDGSTSSVSSYDVVTNVRDVGISTNGEVTGEEETHSPRSVQYTYVEEEVAPSAAVAERQGDPSGSGTADAMAFVESVKKGVDDVFHQQSSGETAREVEVDGKGLLPESVVGEAPTQERGRAADGNTAQTAVNEGDREPVQSSLVSSPQADIPKVTQSEVHAQKEVKQEVPLATVSGATPIVDEKPAPSVTTRGVKIIDKGKAVAHVAEKKQVQVEQPKQRSLTINEGKAGKQLCMFRTCSCGVQLDVYNEATIATRFSNAFTFVDNLKGRSAVFFSKLGEGYTYNGGSHVSSGWPRALEDILTAIKYPSVFDHCLVQKYKMGGGVPFHADDEECYPSDNPILTVNLVGKANFSTKCRKGGKVMVINVASGDYFLMPCGFQRTHLHSVNSIDEGRISLTFRATRRVFGVGRMLQLAGGVSDEKSPGVPNQQPQSQGATRTITPKSGGKALSEGSGREVKGRSTYSIWCEQDYVRKCEWLRADNPVMALEPDYTPMTFEVVKTGTSEDAVVEYLKYLAIGIERTYRALLMARNIAVTTAEGVLKVPNQVYESLPGFHVYKSGTDLIFHSTQDGLRVRDLPYVLIAEKGIFTKGKDVDAVVALGDNLFVCDDILVFHDAINLIGALKVARCGMVGESFKSFEYKCYNAPPGGGKTTTLVDEFVKSPNSTATITANVGSSEDINMAVKKRDPNLEGLNSATTVNSRVVNFIVRGMYKRVLVDEVHMMHQGLLQLGVFATGASEGLFFGDINQIPFINREKVFRMDCAVFVPKKESVVYTSKSYRCPLDVCYLLSSMTVRGTEKCYPEKVVSGKDKPVVRSLSKRPIGTTDDVAEINADVYLCMTQLEKSDMKRSLKGKGKETPVMTVHEAQGKTFSDVVLFRTKKADDSLFTKQPHILVGLSRHTRSLVYAALSSKLDDKVGTYISDASPQSVSDALLHTFAPAGC</sequence>
<comment type="catalytic activity">
    <reaction>
        <text>ATP + H2O = ADP + phosphate + H(+)</text>
        <dbReference type="Rhea" id="RHEA:13065"/>
        <dbReference type="ChEBI" id="CHEBI:15377"/>
        <dbReference type="ChEBI" id="CHEBI:15378"/>
        <dbReference type="ChEBI" id="CHEBI:30616"/>
        <dbReference type="ChEBI" id="CHEBI:43474"/>
        <dbReference type="ChEBI" id="CHEBI:456216"/>
        <dbReference type="EC" id="3.6.4.13"/>
    </reaction>
</comment>
<comment type="cofactor">
    <cofactor evidence="2">
        <name>Fe(2+)</name>
        <dbReference type="ChEBI" id="CHEBI:29033"/>
    </cofactor>
    <text evidence="2">Binds 1 Fe(2+) ion per subunit.</text>
</comment>
<comment type="alternative products">
    <event type="ribosomal frameshifting"/>
    <isoform>
        <id>O71188-1</id>
        <name>Replicase 1a</name>
        <sequence type="displayed"/>
    </isoform>
    <isoform>
        <id>O71189-1</id>
        <name>Replicase 1ab</name>
        <sequence type="external"/>
    </isoform>
    <text>The replicase 1a is produced from conventional translation of the 1a ORF. The replicase 1ab is generated probably by a +1 ribosomal frameshifting mechanism occurring at the 1a-1b genes boundary.</text>
</comment>
<keyword id="KW-0067">ATP-binding</keyword>
<keyword id="KW-0223">Dioxygenase</keyword>
<keyword id="KW-0347">Helicase</keyword>
<keyword id="KW-0378">Hydrolase</keyword>
<keyword id="KW-0408">Iron</keyword>
<keyword id="KW-0479">Metal-binding</keyword>
<keyword id="KW-0489">Methyltransferase</keyword>
<keyword id="KW-0547">Nucleotide-binding</keyword>
<keyword id="KW-0560">Oxidoreductase</keyword>
<keyword id="KW-0645">Protease</keyword>
<keyword id="KW-1185">Reference proteome</keyword>
<keyword id="KW-0688">Ribosomal frameshifting</keyword>
<keyword id="KW-0788">Thiol protease</keyword>
<keyword id="KW-0808">Transferase</keyword>
<protein>
    <recommendedName>
        <fullName>Replicase protein 1a</fullName>
    </recommendedName>
    <component>
        <recommendedName>
            <fullName>Leader protease</fullName>
            <shortName>L-Pro</shortName>
            <ecNumber>3.4.22.-</ecNumber>
        </recommendedName>
        <alternativeName>
            <fullName>Papain-like cysteine proteinase</fullName>
            <shortName>PCP</shortName>
        </alternativeName>
    </component>
    <component>
        <recommendedName>
            <fullName>Methyltransferase/helicase</fullName>
            <ecNumber>2.1.1.-</ecNumber>
            <ecNumber>3.6.4.13</ecNumber>
        </recommendedName>
    </component>
</protein>